<evidence type="ECO:0000255" key="1">
    <source>
        <dbReference type="HAMAP-Rule" id="MF_00171"/>
    </source>
</evidence>
<dbReference type="EC" id="5.4.99.12" evidence="1"/>
<dbReference type="EMBL" id="CP001287">
    <property type="protein sequence ID" value="ACK64329.1"/>
    <property type="molecule type" value="Genomic_DNA"/>
</dbReference>
<dbReference type="RefSeq" id="WP_012593606.1">
    <property type="nucleotide sequence ID" value="NC_011726.1"/>
</dbReference>
<dbReference type="SMR" id="B7K222"/>
<dbReference type="STRING" id="41431.PCC8801_0226"/>
<dbReference type="KEGG" id="cyp:PCC8801_0226"/>
<dbReference type="eggNOG" id="COG0101">
    <property type="taxonomic scope" value="Bacteria"/>
</dbReference>
<dbReference type="HOGENOM" id="CLU_014673_0_1_3"/>
<dbReference type="OrthoDB" id="9811823at2"/>
<dbReference type="Proteomes" id="UP000008204">
    <property type="component" value="Chromosome"/>
</dbReference>
<dbReference type="GO" id="GO:0003723">
    <property type="term" value="F:RNA binding"/>
    <property type="evidence" value="ECO:0007669"/>
    <property type="project" value="InterPro"/>
</dbReference>
<dbReference type="GO" id="GO:0160147">
    <property type="term" value="F:tRNA pseudouridine(38-40) synthase activity"/>
    <property type="evidence" value="ECO:0007669"/>
    <property type="project" value="UniProtKB-EC"/>
</dbReference>
<dbReference type="GO" id="GO:0031119">
    <property type="term" value="P:tRNA pseudouridine synthesis"/>
    <property type="evidence" value="ECO:0007669"/>
    <property type="project" value="UniProtKB-UniRule"/>
</dbReference>
<dbReference type="CDD" id="cd02570">
    <property type="entry name" value="PseudoU_synth_EcTruA"/>
    <property type="match status" value="1"/>
</dbReference>
<dbReference type="FunFam" id="3.30.70.580:FF:000001">
    <property type="entry name" value="tRNA pseudouridine synthase A"/>
    <property type="match status" value="1"/>
</dbReference>
<dbReference type="Gene3D" id="3.30.70.660">
    <property type="entry name" value="Pseudouridine synthase I, catalytic domain, C-terminal subdomain"/>
    <property type="match status" value="1"/>
</dbReference>
<dbReference type="Gene3D" id="3.30.70.580">
    <property type="entry name" value="Pseudouridine synthase I, catalytic domain, N-terminal subdomain"/>
    <property type="match status" value="1"/>
</dbReference>
<dbReference type="HAMAP" id="MF_00171">
    <property type="entry name" value="TruA"/>
    <property type="match status" value="1"/>
</dbReference>
<dbReference type="InterPro" id="IPR020103">
    <property type="entry name" value="PsdUridine_synth_cat_dom_sf"/>
</dbReference>
<dbReference type="InterPro" id="IPR001406">
    <property type="entry name" value="PsdUridine_synth_TruA"/>
</dbReference>
<dbReference type="InterPro" id="IPR020097">
    <property type="entry name" value="PsdUridine_synth_TruA_a/b_dom"/>
</dbReference>
<dbReference type="InterPro" id="IPR020095">
    <property type="entry name" value="PsdUridine_synth_TruA_C"/>
</dbReference>
<dbReference type="InterPro" id="IPR020094">
    <property type="entry name" value="TruA/RsuA/RluB/E/F_N"/>
</dbReference>
<dbReference type="NCBIfam" id="TIGR00071">
    <property type="entry name" value="hisT_truA"/>
    <property type="match status" value="1"/>
</dbReference>
<dbReference type="PANTHER" id="PTHR11142">
    <property type="entry name" value="PSEUDOURIDYLATE SYNTHASE"/>
    <property type="match status" value="1"/>
</dbReference>
<dbReference type="PANTHER" id="PTHR11142:SF0">
    <property type="entry name" value="TRNA PSEUDOURIDINE SYNTHASE-LIKE 1"/>
    <property type="match status" value="1"/>
</dbReference>
<dbReference type="Pfam" id="PF01416">
    <property type="entry name" value="PseudoU_synth_1"/>
    <property type="match status" value="2"/>
</dbReference>
<dbReference type="PIRSF" id="PIRSF001430">
    <property type="entry name" value="tRNA_psdUrid_synth"/>
    <property type="match status" value="1"/>
</dbReference>
<dbReference type="SUPFAM" id="SSF55120">
    <property type="entry name" value="Pseudouridine synthase"/>
    <property type="match status" value="1"/>
</dbReference>
<keyword id="KW-0413">Isomerase</keyword>
<keyword id="KW-1185">Reference proteome</keyword>
<keyword id="KW-0819">tRNA processing</keyword>
<reference key="1">
    <citation type="journal article" date="2011" name="MBio">
        <title>Novel metabolic attributes of the genus Cyanothece, comprising a group of unicellular nitrogen-fixing Cyanobacteria.</title>
        <authorList>
            <person name="Bandyopadhyay A."/>
            <person name="Elvitigala T."/>
            <person name="Welsh E."/>
            <person name="Stockel J."/>
            <person name="Liberton M."/>
            <person name="Min H."/>
            <person name="Sherman L.A."/>
            <person name="Pakrasi H.B."/>
        </authorList>
    </citation>
    <scope>NUCLEOTIDE SEQUENCE [LARGE SCALE GENOMIC DNA]</scope>
    <source>
        <strain>PCC 8801 / RF-1</strain>
    </source>
</reference>
<comment type="function">
    <text evidence="1">Formation of pseudouridine at positions 38, 39 and 40 in the anticodon stem and loop of transfer RNAs.</text>
</comment>
<comment type="catalytic activity">
    <reaction evidence="1">
        <text>uridine(38/39/40) in tRNA = pseudouridine(38/39/40) in tRNA</text>
        <dbReference type="Rhea" id="RHEA:22376"/>
        <dbReference type="Rhea" id="RHEA-COMP:10085"/>
        <dbReference type="Rhea" id="RHEA-COMP:10087"/>
        <dbReference type="ChEBI" id="CHEBI:65314"/>
        <dbReference type="ChEBI" id="CHEBI:65315"/>
        <dbReference type="EC" id="5.4.99.12"/>
    </reaction>
</comment>
<comment type="subunit">
    <text evidence="1">Homodimer.</text>
</comment>
<comment type="similarity">
    <text evidence="1">Belongs to the tRNA pseudouridine synthase TruA family.</text>
</comment>
<proteinExistence type="inferred from homology"/>
<name>TRUA_RIPO1</name>
<gene>
    <name evidence="1" type="primary">truA</name>
    <name type="ordered locus">PCC8801_0226</name>
</gene>
<accession>B7K222</accession>
<sequence>MKGTQTKEKQRVALVIQYLGSRFHGWQWQPNQRTVQAEIENAIAEVLGETVTLHGAGRTDAGVHAAAQVAHFDMVSPIPASRWVDILNARLPEDILIRGSAQVPLTWHARFSAQWRRYRYTFYTEQRPNLFVKPYSWHYYHFPLDESLMQQALNPLLGRHHLAAFHRAGSRRDHSWVEVQSTHCHRQGPFIHLEIQANGFLYGMVRLLVGLLVEVGSGKRSLENFTEIWRKQQREAVKYAAPAKGLCLLRVGYEEFPFPPSLWFDSQPLFLFNQVLDSSLSFPNQSLPYGMTS</sequence>
<protein>
    <recommendedName>
        <fullName evidence="1">tRNA pseudouridine synthase A</fullName>
        <ecNumber evidence="1">5.4.99.12</ecNumber>
    </recommendedName>
    <alternativeName>
        <fullName evidence="1">tRNA pseudouridine(38-40) synthase</fullName>
    </alternativeName>
    <alternativeName>
        <fullName evidence="1">tRNA pseudouridylate synthase I</fullName>
    </alternativeName>
    <alternativeName>
        <fullName evidence="1">tRNA-uridine isomerase I</fullName>
    </alternativeName>
</protein>
<organism>
    <name type="scientific">Rippkaea orientalis (strain PCC 8801 / RF-1)</name>
    <name type="common">Cyanothece sp. (strain PCC 8801)</name>
    <dbReference type="NCBI Taxonomy" id="41431"/>
    <lineage>
        <taxon>Bacteria</taxon>
        <taxon>Bacillati</taxon>
        <taxon>Cyanobacteriota</taxon>
        <taxon>Cyanophyceae</taxon>
        <taxon>Oscillatoriophycideae</taxon>
        <taxon>Chroococcales</taxon>
        <taxon>Aphanothecaceae</taxon>
        <taxon>Rippkaea</taxon>
        <taxon>Rippkaea orientalis</taxon>
    </lineage>
</organism>
<feature type="chain" id="PRO_1000194545" description="tRNA pseudouridine synthase A">
    <location>
        <begin position="1"/>
        <end position="293"/>
    </location>
</feature>
<feature type="active site" description="Nucleophile" evidence="1">
    <location>
        <position position="60"/>
    </location>
</feature>
<feature type="binding site" evidence="1">
    <location>
        <position position="118"/>
    </location>
    <ligand>
        <name>substrate</name>
    </ligand>
</feature>